<dbReference type="EMBL" id="AP002819">
    <property type="protein sequence ID" value="BAB21082.1"/>
    <property type="molecule type" value="Genomic_DNA"/>
</dbReference>
<dbReference type="EMBL" id="AP008207">
    <property type="protein sequence ID" value="BAF05527.1"/>
    <property type="molecule type" value="Genomic_DNA"/>
</dbReference>
<dbReference type="EMBL" id="AP014957">
    <property type="protein sequence ID" value="BAS73226.1"/>
    <property type="molecule type" value="Genomic_DNA"/>
</dbReference>
<dbReference type="EMBL" id="AK064316">
    <property type="status" value="NOT_ANNOTATED_CDS"/>
    <property type="molecule type" value="mRNA"/>
</dbReference>
<dbReference type="EMBL" id="AK102399">
    <property type="protein sequence ID" value="BAG95539.1"/>
    <property type="molecule type" value="mRNA"/>
</dbReference>
<dbReference type="RefSeq" id="XP_015650826.1">
    <property type="nucleotide sequence ID" value="XM_015795340.1"/>
</dbReference>
<dbReference type="SMR" id="Q9AXA6"/>
<dbReference type="FunCoup" id="Q9AXA6">
    <property type="interactions" value="2293"/>
</dbReference>
<dbReference type="STRING" id="39947.Q9AXA6"/>
<dbReference type="PaxDb" id="39947-Q9AXA6"/>
<dbReference type="EnsemblPlants" id="Os01t0622700-01">
    <property type="protein sequence ID" value="Os01t0622700-01"/>
    <property type="gene ID" value="Os01g0622700"/>
</dbReference>
<dbReference type="EnsemblPlants" id="Os01t0622700-02">
    <property type="protein sequence ID" value="Os01t0622700-02"/>
    <property type="gene ID" value="Os01g0622700"/>
</dbReference>
<dbReference type="Gramene" id="Os01t0622700-01">
    <property type="protein sequence ID" value="Os01t0622700-01"/>
    <property type="gene ID" value="Os01g0622700"/>
</dbReference>
<dbReference type="Gramene" id="Os01t0622700-02">
    <property type="protein sequence ID" value="Os01t0622700-02"/>
    <property type="gene ID" value="Os01g0622700"/>
</dbReference>
<dbReference type="KEGG" id="dosa:Os01g0622700"/>
<dbReference type="eggNOG" id="KOG2546">
    <property type="taxonomic scope" value="Eukaryota"/>
</dbReference>
<dbReference type="HOGENOM" id="CLU_054853_0_0_1"/>
<dbReference type="InParanoid" id="Q9AXA6"/>
<dbReference type="OMA" id="IIRAPNR"/>
<dbReference type="OrthoDB" id="5971719at2759"/>
<dbReference type="Proteomes" id="UP000000763">
    <property type="component" value="Chromosome 1"/>
</dbReference>
<dbReference type="Proteomes" id="UP000059680">
    <property type="component" value="Chromosome 1"/>
</dbReference>
<dbReference type="GO" id="GO:0005737">
    <property type="term" value="C:cytoplasm"/>
    <property type="evidence" value="ECO:0007669"/>
    <property type="project" value="UniProtKB-KW"/>
</dbReference>
<dbReference type="GO" id="GO:0005856">
    <property type="term" value="C:cytoskeleton"/>
    <property type="evidence" value="ECO:0007669"/>
    <property type="project" value="UniProtKB-SubCell"/>
</dbReference>
<dbReference type="Gene3D" id="6.10.140.1620">
    <property type="match status" value="1"/>
</dbReference>
<dbReference type="InterPro" id="IPR028457">
    <property type="entry name" value="ABI"/>
</dbReference>
<dbReference type="PANTHER" id="PTHR10460:SF0">
    <property type="entry name" value="ABELSON INTERACTING PROTEIN, ISOFORM D"/>
    <property type="match status" value="1"/>
</dbReference>
<dbReference type="PANTHER" id="PTHR10460">
    <property type="entry name" value="ABL INTERACTOR FAMILY MEMBER"/>
    <property type="match status" value="1"/>
</dbReference>
<gene>
    <name type="ordered locus">Os01g0622700</name>
    <name type="ordered locus">LOC_Os01g43420</name>
    <name type="ORF">P0501G01.11</name>
</gene>
<name>ABIL1_ORYSJ</name>
<feature type="chain" id="PRO_0000191798" description="Probable protein ABIL1">
    <location>
        <begin position="1"/>
        <end position="306"/>
    </location>
</feature>
<feature type="region of interest" description="Disordered" evidence="2">
    <location>
        <begin position="200"/>
        <end position="236"/>
    </location>
</feature>
<feature type="sequence conflict" description="In Ref. 5; AK064316." evidence="3" ref="5">
    <original>H</original>
    <variation>Y</variation>
    <location>
        <position position="262"/>
    </location>
</feature>
<organism>
    <name type="scientific">Oryza sativa subsp. japonica</name>
    <name type="common">Rice</name>
    <dbReference type="NCBI Taxonomy" id="39947"/>
    <lineage>
        <taxon>Eukaryota</taxon>
        <taxon>Viridiplantae</taxon>
        <taxon>Streptophyta</taxon>
        <taxon>Embryophyta</taxon>
        <taxon>Tracheophyta</taxon>
        <taxon>Spermatophyta</taxon>
        <taxon>Magnoliopsida</taxon>
        <taxon>Liliopsida</taxon>
        <taxon>Poales</taxon>
        <taxon>Poaceae</taxon>
        <taxon>BOP clade</taxon>
        <taxon>Oryzoideae</taxon>
        <taxon>Oryzeae</taxon>
        <taxon>Oryzinae</taxon>
        <taxon>Oryza</taxon>
        <taxon>Oryza sativa</taxon>
    </lineage>
</organism>
<protein>
    <recommendedName>
        <fullName>Probable protein ABIL1</fullName>
    </recommendedName>
    <alternativeName>
        <fullName>Abl interactor-like protein 1</fullName>
    </alternativeName>
</protein>
<proteinExistence type="evidence at transcript level"/>
<accession>Q9AXA6</accession>
<accession>Q0JL51</accession>
<keyword id="KW-0963">Cytoplasm</keyword>
<keyword id="KW-0206">Cytoskeleton</keyword>
<keyword id="KW-1185">Reference proteome</keyword>
<comment type="function">
    <text evidence="1">Involved in regulation of actin and microtubule organization. Part of a WAVE complex that activates the Arp2/3 complex (By similarity).</text>
</comment>
<comment type="subunit">
    <text evidence="1">Binds SCAR.</text>
</comment>
<comment type="subcellular location">
    <subcellularLocation>
        <location evidence="1">Cytoplasm</location>
        <location evidence="1">Cytoskeleton</location>
    </subcellularLocation>
</comment>
<comment type="similarity">
    <text evidence="3">Belongs to the ABI family.</text>
</comment>
<evidence type="ECO:0000250" key="1"/>
<evidence type="ECO:0000256" key="2">
    <source>
        <dbReference type="SAM" id="MobiDB-lite"/>
    </source>
</evidence>
<evidence type="ECO:0000305" key="3"/>
<reference key="1">
    <citation type="journal article" date="2002" name="Nature">
        <title>The genome sequence and structure of rice chromosome 1.</title>
        <authorList>
            <person name="Sasaki T."/>
            <person name="Matsumoto T."/>
            <person name="Yamamoto K."/>
            <person name="Sakata K."/>
            <person name="Baba T."/>
            <person name="Katayose Y."/>
            <person name="Wu J."/>
            <person name="Niimura Y."/>
            <person name="Cheng Z."/>
            <person name="Nagamura Y."/>
            <person name="Antonio B.A."/>
            <person name="Kanamori H."/>
            <person name="Hosokawa S."/>
            <person name="Masukawa M."/>
            <person name="Arikawa K."/>
            <person name="Chiden Y."/>
            <person name="Hayashi M."/>
            <person name="Okamoto M."/>
            <person name="Ando T."/>
            <person name="Aoki H."/>
            <person name="Arita K."/>
            <person name="Hamada M."/>
            <person name="Harada C."/>
            <person name="Hijishita S."/>
            <person name="Honda M."/>
            <person name="Ichikawa Y."/>
            <person name="Idonuma A."/>
            <person name="Iijima M."/>
            <person name="Ikeda M."/>
            <person name="Ikeno M."/>
            <person name="Ito S."/>
            <person name="Ito T."/>
            <person name="Ito Y."/>
            <person name="Ito Y."/>
            <person name="Iwabuchi A."/>
            <person name="Kamiya K."/>
            <person name="Karasawa W."/>
            <person name="Katagiri S."/>
            <person name="Kikuta A."/>
            <person name="Kobayashi N."/>
            <person name="Kono I."/>
            <person name="Machita K."/>
            <person name="Maehara T."/>
            <person name="Mizuno H."/>
            <person name="Mizubayashi T."/>
            <person name="Mukai Y."/>
            <person name="Nagasaki H."/>
            <person name="Nakashima M."/>
            <person name="Nakama Y."/>
            <person name="Nakamichi Y."/>
            <person name="Nakamura M."/>
            <person name="Namiki N."/>
            <person name="Negishi M."/>
            <person name="Ohta I."/>
            <person name="Ono N."/>
            <person name="Saji S."/>
            <person name="Sakai K."/>
            <person name="Shibata M."/>
            <person name="Shimokawa T."/>
            <person name="Shomura A."/>
            <person name="Song J."/>
            <person name="Takazaki Y."/>
            <person name="Terasawa K."/>
            <person name="Tsuji K."/>
            <person name="Waki K."/>
            <person name="Yamagata H."/>
            <person name="Yamane H."/>
            <person name="Yoshiki S."/>
            <person name="Yoshihara R."/>
            <person name="Yukawa K."/>
            <person name="Zhong H."/>
            <person name="Iwama H."/>
            <person name="Endo T."/>
            <person name="Ito H."/>
            <person name="Hahn J.H."/>
            <person name="Kim H.-I."/>
            <person name="Eun M.-Y."/>
            <person name="Yano M."/>
            <person name="Jiang J."/>
            <person name="Gojobori T."/>
        </authorList>
    </citation>
    <scope>NUCLEOTIDE SEQUENCE [LARGE SCALE GENOMIC DNA]</scope>
    <source>
        <strain>cv. Nipponbare</strain>
    </source>
</reference>
<reference key="2">
    <citation type="journal article" date="2005" name="Nature">
        <title>The map-based sequence of the rice genome.</title>
        <authorList>
            <consortium name="International rice genome sequencing project (IRGSP)"/>
        </authorList>
    </citation>
    <scope>NUCLEOTIDE SEQUENCE [LARGE SCALE GENOMIC DNA]</scope>
    <source>
        <strain>cv. Nipponbare</strain>
    </source>
</reference>
<reference key="3">
    <citation type="journal article" date="2008" name="Nucleic Acids Res.">
        <title>The rice annotation project database (RAP-DB): 2008 update.</title>
        <authorList>
            <consortium name="The rice annotation project (RAP)"/>
        </authorList>
    </citation>
    <scope>GENOME REANNOTATION</scope>
    <source>
        <strain>cv. Nipponbare</strain>
    </source>
</reference>
<reference key="4">
    <citation type="journal article" date="2013" name="Rice">
        <title>Improvement of the Oryza sativa Nipponbare reference genome using next generation sequence and optical map data.</title>
        <authorList>
            <person name="Kawahara Y."/>
            <person name="de la Bastide M."/>
            <person name="Hamilton J.P."/>
            <person name="Kanamori H."/>
            <person name="McCombie W.R."/>
            <person name="Ouyang S."/>
            <person name="Schwartz D.C."/>
            <person name="Tanaka T."/>
            <person name="Wu J."/>
            <person name="Zhou S."/>
            <person name="Childs K.L."/>
            <person name="Davidson R.M."/>
            <person name="Lin H."/>
            <person name="Quesada-Ocampo L."/>
            <person name="Vaillancourt B."/>
            <person name="Sakai H."/>
            <person name="Lee S.S."/>
            <person name="Kim J."/>
            <person name="Numa H."/>
            <person name="Itoh T."/>
            <person name="Buell C.R."/>
            <person name="Matsumoto T."/>
        </authorList>
    </citation>
    <scope>GENOME REANNOTATION</scope>
    <source>
        <strain>cv. Nipponbare</strain>
    </source>
</reference>
<reference key="5">
    <citation type="journal article" date="2003" name="Science">
        <title>Collection, mapping, and annotation of over 28,000 cDNA clones from japonica rice.</title>
        <authorList>
            <consortium name="The rice full-length cDNA consortium"/>
        </authorList>
    </citation>
    <scope>NUCLEOTIDE SEQUENCE [LARGE SCALE MRNA]</scope>
    <source>
        <strain>cv. Nipponbare</strain>
    </source>
</reference>
<sequence>MQQQQAWAAGLGGLAVAGVGEEGGGGGPAPTTVDEASMERSKSFVKALQELKNLRPQLYSASEYCEKSYLHSEQKQMVLDNLKDYAVRALVNAVDHLGTVAYKLTDLYEQQASEVSTLELKVACLNQQVLTCQTYTDKEGIRQQQMTGTATRHHKHYIVPTLANKRMQAFSEMQTDADIDSRPRPYPSAKTLFWHLASEKNSKTNGARQSEFVLEETKATKPASRGKEPSTSPLPKHLQTNLASSDFAMHNVGMKDQPGVRHLSSFSSFDNPRGRQIQKAPLRTKSMLAAFFVKHKSGKMKNVSVR</sequence>